<organism>
    <name type="scientific">Staurastrum punctulatum</name>
    <name type="common">Green alga</name>
    <name type="synonym">Cosmoastrum punctulatum</name>
    <dbReference type="NCBI Taxonomy" id="102822"/>
    <lineage>
        <taxon>Eukaryota</taxon>
        <taxon>Viridiplantae</taxon>
        <taxon>Streptophyta</taxon>
        <taxon>Zygnematophyceae</taxon>
        <taxon>Zygnematophycidae</taxon>
        <taxon>Desmidiales</taxon>
        <taxon>Desmidiaceae</taxon>
        <taxon>Staurastrum</taxon>
    </lineage>
</organism>
<protein>
    <recommendedName>
        <fullName evidence="1">ATP synthase subunit c, chloroplastic</fullName>
    </recommendedName>
    <alternativeName>
        <fullName evidence="1">ATP synthase F(0) sector subunit c</fullName>
    </alternativeName>
    <alternativeName>
        <fullName evidence="1">ATPase subunit III</fullName>
    </alternativeName>
    <alternativeName>
        <fullName evidence="1">F-type ATPase subunit c</fullName>
        <shortName evidence="1">F-ATPase subunit c</shortName>
    </alternativeName>
    <alternativeName>
        <fullName evidence="1">Lipid-binding protein</fullName>
    </alternativeName>
</protein>
<reference key="1">
    <citation type="journal article" date="2005" name="BMC Biol.">
        <title>The complete chloroplast DNA sequences of the charophycean green algae Staurastrum and Zygnema reveal that the chloroplast genome underwent extensive changes during the evolution of the Zygnematales.</title>
        <authorList>
            <person name="Turmel M."/>
            <person name="Otis C."/>
            <person name="Lemieux C."/>
        </authorList>
    </citation>
    <scope>NUCLEOTIDE SEQUENCE [LARGE SCALE GENOMIC DNA]</scope>
</reference>
<proteinExistence type="inferred from homology"/>
<gene>
    <name evidence="1" type="primary">atpH</name>
</gene>
<keyword id="KW-0066">ATP synthesis</keyword>
<keyword id="KW-0138">CF(0)</keyword>
<keyword id="KW-0150">Chloroplast</keyword>
<keyword id="KW-0375">Hydrogen ion transport</keyword>
<keyword id="KW-0406">Ion transport</keyword>
<keyword id="KW-0446">Lipid-binding</keyword>
<keyword id="KW-0472">Membrane</keyword>
<keyword id="KW-0934">Plastid</keyword>
<keyword id="KW-0793">Thylakoid</keyword>
<keyword id="KW-0812">Transmembrane</keyword>
<keyword id="KW-1133">Transmembrane helix</keyword>
<keyword id="KW-0813">Transport</keyword>
<comment type="function">
    <text evidence="1">F(1)F(0) ATP synthase produces ATP from ADP in the presence of a proton or sodium gradient. F-type ATPases consist of two structural domains, F(1) containing the extramembraneous catalytic core and F(0) containing the membrane proton channel, linked together by a central stalk and a peripheral stalk. During catalysis, ATP synthesis in the catalytic domain of F(1) is coupled via a rotary mechanism of the central stalk subunits to proton translocation.</text>
</comment>
<comment type="function">
    <text evidence="1">Key component of the F(0) channel; it plays a direct role in translocation across the membrane. A homomeric c-ring of between 10-14 subunits forms the central stalk rotor element with the F(1) delta and epsilon subunits.</text>
</comment>
<comment type="subunit">
    <text evidence="1">F-type ATPases have 2 components, F(1) - the catalytic core - and F(0) - the membrane proton channel. F(1) has five subunits: alpha(3), beta(3), gamma(1), delta(1), epsilon(1). F(0) has four main subunits: a(1), b(1), b'(1) and c(10-14). The alpha and beta chains form an alternating ring which encloses part of the gamma chain. F(1) is attached to F(0) by a central stalk formed by the gamma and epsilon chains, while a peripheral stalk is formed by the delta, b and b' chains.</text>
</comment>
<comment type="subcellular location">
    <subcellularLocation>
        <location evidence="1">Plastid</location>
        <location evidence="1">Chloroplast thylakoid membrane</location>
        <topology evidence="1">Multi-pass membrane protein</topology>
    </subcellularLocation>
</comment>
<comment type="miscellaneous">
    <text>In plastids the F-type ATPase is also known as CF(1)CF(0).</text>
</comment>
<comment type="similarity">
    <text evidence="1">Belongs to the ATPase C chain family.</text>
</comment>
<evidence type="ECO:0000255" key="1">
    <source>
        <dbReference type="HAMAP-Rule" id="MF_01396"/>
    </source>
</evidence>
<dbReference type="EMBL" id="AY958085">
    <property type="protein sequence ID" value="AAX45686.1"/>
    <property type="molecule type" value="Genomic_DNA"/>
</dbReference>
<dbReference type="RefSeq" id="YP_636450.1">
    <property type="nucleotide sequence ID" value="NC_008116.1"/>
</dbReference>
<dbReference type="SMR" id="Q32RS6"/>
<dbReference type="GeneID" id="4108645"/>
<dbReference type="GO" id="GO:0009535">
    <property type="term" value="C:chloroplast thylakoid membrane"/>
    <property type="evidence" value="ECO:0007669"/>
    <property type="project" value="UniProtKB-SubCell"/>
</dbReference>
<dbReference type="GO" id="GO:0045259">
    <property type="term" value="C:proton-transporting ATP synthase complex"/>
    <property type="evidence" value="ECO:0007669"/>
    <property type="project" value="UniProtKB-KW"/>
</dbReference>
<dbReference type="GO" id="GO:0033177">
    <property type="term" value="C:proton-transporting two-sector ATPase complex, proton-transporting domain"/>
    <property type="evidence" value="ECO:0007669"/>
    <property type="project" value="InterPro"/>
</dbReference>
<dbReference type="GO" id="GO:0008289">
    <property type="term" value="F:lipid binding"/>
    <property type="evidence" value="ECO:0007669"/>
    <property type="project" value="UniProtKB-KW"/>
</dbReference>
<dbReference type="GO" id="GO:0046933">
    <property type="term" value="F:proton-transporting ATP synthase activity, rotational mechanism"/>
    <property type="evidence" value="ECO:0007669"/>
    <property type="project" value="UniProtKB-UniRule"/>
</dbReference>
<dbReference type="CDD" id="cd18183">
    <property type="entry name" value="ATP-synt_Fo_c_ATPH"/>
    <property type="match status" value="1"/>
</dbReference>
<dbReference type="FunFam" id="1.20.20.10:FF:000001">
    <property type="entry name" value="ATP synthase subunit c, chloroplastic"/>
    <property type="match status" value="1"/>
</dbReference>
<dbReference type="Gene3D" id="1.20.20.10">
    <property type="entry name" value="F1F0 ATP synthase subunit C"/>
    <property type="match status" value="1"/>
</dbReference>
<dbReference type="HAMAP" id="MF_01396">
    <property type="entry name" value="ATP_synth_c_bact"/>
    <property type="match status" value="1"/>
</dbReference>
<dbReference type="InterPro" id="IPR005953">
    <property type="entry name" value="ATP_synth_csu_bac/chlpt"/>
</dbReference>
<dbReference type="InterPro" id="IPR000454">
    <property type="entry name" value="ATP_synth_F0_csu"/>
</dbReference>
<dbReference type="InterPro" id="IPR020537">
    <property type="entry name" value="ATP_synth_F0_csu_DDCD_BS"/>
</dbReference>
<dbReference type="InterPro" id="IPR038662">
    <property type="entry name" value="ATP_synth_F0_csu_sf"/>
</dbReference>
<dbReference type="InterPro" id="IPR002379">
    <property type="entry name" value="ATPase_proteolipid_c-like_dom"/>
</dbReference>
<dbReference type="InterPro" id="IPR035921">
    <property type="entry name" value="F/V-ATP_Csub_sf"/>
</dbReference>
<dbReference type="NCBIfam" id="TIGR01260">
    <property type="entry name" value="ATP_synt_c"/>
    <property type="match status" value="1"/>
</dbReference>
<dbReference type="NCBIfam" id="NF005608">
    <property type="entry name" value="PRK07354.1"/>
    <property type="match status" value="1"/>
</dbReference>
<dbReference type="PANTHER" id="PTHR10031">
    <property type="entry name" value="ATP SYNTHASE LIPID-BINDING PROTEIN, MITOCHONDRIAL"/>
    <property type="match status" value="1"/>
</dbReference>
<dbReference type="PANTHER" id="PTHR10031:SF0">
    <property type="entry name" value="ATPASE PROTEIN 9"/>
    <property type="match status" value="1"/>
</dbReference>
<dbReference type="Pfam" id="PF00137">
    <property type="entry name" value="ATP-synt_C"/>
    <property type="match status" value="1"/>
</dbReference>
<dbReference type="PRINTS" id="PR00124">
    <property type="entry name" value="ATPASEC"/>
</dbReference>
<dbReference type="SUPFAM" id="SSF81333">
    <property type="entry name" value="F1F0 ATP synthase subunit C"/>
    <property type="match status" value="1"/>
</dbReference>
<dbReference type="PROSITE" id="PS00605">
    <property type="entry name" value="ATPASE_C"/>
    <property type="match status" value="1"/>
</dbReference>
<sequence>MNPVISAASVIAAGLAVGLASIGPGIGQGTAAGQAVEGIARQPEAEGKIRGTLLLSLAFMEALTIYGLVVALALLFANPFV</sequence>
<name>ATPH_STAPU</name>
<feature type="chain" id="PRO_0000362964" description="ATP synthase subunit c, chloroplastic">
    <location>
        <begin position="1"/>
        <end position="81"/>
    </location>
</feature>
<feature type="transmembrane region" description="Helical" evidence="1">
    <location>
        <begin position="7"/>
        <end position="27"/>
    </location>
</feature>
<feature type="transmembrane region" description="Helical" evidence="1">
    <location>
        <begin position="57"/>
        <end position="77"/>
    </location>
</feature>
<feature type="site" description="Reversibly protonated during proton transport" evidence="1">
    <location>
        <position position="61"/>
    </location>
</feature>
<geneLocation type="chloroplast"/>
<accession>Q32RS6</accession>